<accession>Q54T27</accession>
<name>IF2B_DICDI</name>
<sequence length="317" mass="35887">MSATEEENVLVFDTTMKKKKKSKDSAAQTEEEKKKLKSKTLAMMSQQEDEQEQEDEKKEKRKKKKAALLASTEGENSEAIEKLENEGAHDEDIEAEFMGEKKKKKKSSKSSTTTTTSTTTTTTEPTETEPTEDGESKEKTITTSDGDTFVQGTIPWAGTDRDYKYSELTYRIYHLLQANNPDLISDQKRTMKPPQVMREGTKKTIWANFAEICGTLNRKVEHVYNYVFAELGTNGSIDGNQRLVIRGRFKTSQIEIVIRHYISEYVACRNCKSPNTVLERNNRLYFLCCNACNSKRSVAVIKKGLEGAGKKAPKEQS</sequence>
<dbReference type="EMBL" id="AAFI02000044">
    <property type="protein sequence ID" value="EAL66439.1"/>
    <property type="molecule type" value="Genomic_DNA"/>
</dbReference>
<dbReference type="RefSeq" id="XP_640424.1">
    <property type="nucleotide sequence ID" value="XM_635332.1"/>
</dbReference>
<dbReference type="SMR" id="Q54T27"/>
<dbReference type="FunCoup" id="Q54T27">
    <property type="interactions" value="603"/>
</dbReference>
<dbReference type="STRING" id="44689.Q54T27"/>
<dbReference type="PaxDb" id="44689-DDB0234112"/>
<dbReference type="EnsemblProtists" id="EAL66439">
    <property type="protein sequence ID" value="EAL66439"/>
    <property type="gene ID" value="DDB_G0282035"/>
</dbReference>
<dbReference type="GeneID" id="8623377"/>
<dbReference type="KEGG" id="ddi:DDB_G0282035"/>
<dbReference type="dictyBase" id="DDB_G0282035">
    <property type="gene designation" value="eif2s2"/>
</dbReference>
<dbReference type="VEuPathDB" id="AmoebaDB:DDB_G0282035"/>
<dbReference type="eggNOG" id="KOG2768">
    <property type="taxonomic scope" value="Eukaryota"/>
</dbReference>
<dbReference type="HOGENOM" id="CLU_026663_0_1_1"/>
<dbReference type="InParanoid" id="Q54T27"/>
<dbReference type="OMA" id="CMREGNK"/>
<dbReference type="PhylomeDB" id="Q54T27"/>
<dbReference type="Reactome" id="R-DDI-156827">
    <property type="pathway name" value="L13a-mediated translational silencing of Ceruloplasmin expression"/>
</dbReference>
<dbReference type="Reactome" id="R-DDI-382556">
    <property type="pathway name" value="ABC-family proteins mediated transport"/>
</dbReference>
<dbReference type="Reactome" id="R-DDI-72695">
    <property type="pathway name" value="Formation of the ternary complex, and subsequently, the 43S complex"/>
</dbReference>
<dbReference type="Reactome" id="R-DDI-72702">
    <property type="pathway name" value="Ribosomal scanning and start codon recognition"/>
</dbReference>
<dbReference type="Reactome" id="R-DDI-72731">
    <property type="pathway name" value="Recycling of eIF2:GDP"/>
</dbReference>
<dbReference type="Reactome" id="R-DDI-9840373">
    <property type="pathway name" value="Cellular response to mitochondrial stress"/>
</dbReference>
<dbReference type="PRO" id="PR:Q54T27"/>
<dbReference type="Proteomes" id="UP000002195">
    <property type="component" value="Chromosome 3"/>
</dbReference>
<dbReference type="GO" id="GO:0005829">
    <property type="term" value="C:cytosol"/>
    <property type="evidence" value="ECO:0007669"/>
    <property type="project" value="UniProtKB-SubCell"/>
</dbReference>
<dbReference type="GO" id="GO:0005850">
    <property type="term" value="C:eukaryotic translation initiation factor 2 complex"/>
    <property type="evidence" value="ECO:0000250"/>
    <property type="project" value="UniProtKB"/>
</dbReference>
<dbReference type="GO" id="GO:0003729">
    <property type="term" value="F:mRNA binding"/>
    <property type="evidence" value="ECO:0000318"/>
    <property type="project" value="GO_Central"/>
</dbReference>
<dbReference type="GO" id="GO:0003743">
    <property type="term" value="F:translation initiation factor activity"/>
    <property type="evidence" value="ECO:0000250"/>
    <property type="project" value="dictyBase"/>
</dbReference>
<dbReference type="GO" id="GO:0031369">
    <property type="term" value="F:translation initiation factor binding"/>
    <property type="evidence" value="ECO:0000318"/>
    <property type="project" value="GO_Central"/>
</dbReference>
<dbReference type="GO" id="GO:0008270">
    <property type="term" value="F:zinc ion binding"/>
    <property type="evidence" value="ECO:0007669"/>
    <property type="project" value="UniProtKB-KW"/>
</dbReference>
<dbReference type="GO" id="GO:0002183">
    <property type="term" value="P:cytoplasmic translational initiation"/>
    <property type="evidence" value="ECO:0000250"/>
    <property type="project" value="UniProtKB"/>
</dbReference>
<dbReference type="GO" id="GO:0001731">
    <property type="term" value="P:formation of translation preinitiation complex"/>
    <property type="evidence" value="ECO:0000318"/>
    <property type="project" value="GO_Central"/>
</dbReference>
<dbReference type="FunFam" id="3.30.30.170:FF:000001">
    <property type="entry name" value="Eukaryotic translation initiation factor 2 subunit"/>
    <property type="match status" value="1"/>
</dbReference>
<dbReference type="Gene3D" id="3.30.30.170">
    <property type="match status" value="1"/>
</dbReference>
<dbReference type="InterPro" id="IPR045196">
    <property type="entry name" value="IF2/IF5"/>
</dbReference>
<dbReference type="InterPro" id="IPR002735">
    <property type="entry name" value="Transl_init_fac_IF2/IF5_dom"/>
</dbReference>
<dbReference type="InterPro" id="IPR016189">
    <property type="entry name" value="Transl_init_fac_IF2/IF5_N"/>
</dbReference>
<dbReference type="InterPro" id="IPR016190">
    <property type="entry name" value="Transl_init_fac_IF2/IF5_Zn-bd"/>
</dbReference>
<dbReference type="PANTHER" id="PTHR23001">
    <property type="entry name" value="EUKARYOTIC TRANSLATION INITIATION FACTOR"/>
    <property type="match status" value="1"/>
</dbReference>
<dbReference type="PANTHER" id="PTHR23001:SF3">
    <property type="entry name" value="EUKARYOTIC TRANSLATION INITIATION FACTOR 2 SUBUNIT 2"/>
    <property type="match status" value="1"/>
</dbReference>
<dbReference type="Pfam" id="PF01873">
    <property type="entry name" value="eIF-5_eIF-2B"/>
    <property type="match status" value="1"/>
</dbReference>
<dbReference type="SMART" id="SM00653">
    <property type="entry name" value="eIF2B_5"/>
    <property type="match status" value="1"/>
</dbReference>
<dbReference type="SUPFAM" id="SSF100966">
    <property type="entry name" value="Translation initiation factor 2 beta, aIF2beta, N-terminal domain"/>
    <property type="match status" value="1"/>
</dbReference>
<dbReference type="SUPFAM" id="SSF75689">
    <property type="entry name" value="Zinc-binding domain of translation initiation factor 2 beta"/>
    <property type="match status" value="1"/>
</dbReference>
<reference key="1">
    <citation type="journal article" date="2005" name="Nature">
        <title>The genome of the social amoeba Dictyostelium discoideum.</title>
        <authorList>
            <person name="Eichinger L."/>
            <person name="Pachebat J.A."/>
            <person name="Gloeckner G."/>
            <person name="Rajandream M.A."/>
            <person name="Sucgang R."/>
            <person name="Berriman M."/>
            <person name="Song J."/>
            <person name="Olsen R."/>
            <person name="Szafranski K."/>
            <person name="Xu Q."/>
            <person name="Tunggal B."/>
            <person name="Kummerfeld S."/>
            <person name="Madera M."/>
            <person name="Konfortov B.A."/>
            <person name="Rivero F."/>
            <person name="Bankier A.T."/>
            <person name="Lehmann R."/>
            <person name="Hamlin N."/>
            <person name="Davies R."/>
            <person name="Gaudet P."/>
            <person name="Fey P."/>
            <person name="Pilcher K."/>
            <person name="Chen G."/>
            <person name="Saunders D."/>
            <person name="Sodergren E.J."/>
            <person name="Davis P."/>
            <person name="Kerhornou A."/>
            <person name="Nie X."/>
            <person name="Hall N."/>
            <person name="Anjard C."/>
            <person name="Hemphill L."/>
            <person name="Bason N."/>
            <person name="Farbrother P."/>
            <person name="Desany B."/>
            <person name="Just E."/>
            <person name="Morio T."/>
            <person name="Rost R."/>
            <person name="Churcher C.M."/>
            <person name="Cooper J."/>
            <person name="Haydock S."/>
            <person name="van Driessche N."/>
            <person name="Cronin A."/>
            <person name="Goodhead I."/>
            <person name="Muzny D.M."/>
            <person name="Mourier T."/>
            <person name="Pain A."/>
            <person name="Lu M."/>
            <person name="Harper D."/>
            <person name="Lindsay R."/>
            <person name="Hauser H."/>
            <person name="James K.D."/>
            <person name="Quiles M."/>
            <person name="Madan Babu M."/>
            <person name="Saito T."/>
            <person name="Buchrieser C."/>
            <person name="Wardroper A."/>
            <person name="Felder M."/>
            <person name="Thangavelu M."/>
            <person name="Johnson D."/>
            <person name="Knights A."/>
            <person name="Loulseged H."/>
            <person name="Mungall K.L."/>
            <person name="Oliver K."/>
            <person name="Price C."/>
            <person name="Quail M.A."/>
            <person name="Urushihara H."/>
            <person name="Hernandez J."/>
            <person name="Rabbinowitsch E."/>
            <person name="Steffen D."/>
            <person name="Sanders M."/>
            <person name="Ma J."/>
            <person name="Kohara Y."/>
            <person name="Sharp S."/>
            <person name="Simmonds M.N."/>
            <person name="Spiegler S."/>
            <person name="Tivey A."/>
            <person name="Sugano S."/>
            <person name="White B."/>
            <person name="Walker D."/>
            <person name="Woodward J.R."/>
            <person name="Winckler T."/>
            <person name="Tanaka Y."/>
            <person name="Shaulsky G."/>
            <person name="Schleicher M."/>
            <person name="Weinstock G.M."/>
            <person name="Rosenthal A."/>
            <person name="Cox E.C."/>
            <person name="Chisholm R.L."/>
            <person name="Gibbs R.A."/>
            <person name="Loomis W.F."/>
            <person name="Platzer M."/>
            <person name="Kay R.R."/>
            <person name="Williams J.G."/>
            <person name="Dear P.H."/>
            <person name="Noegel A.A."/>
            <person name="Barrell B.G."/>
            <person name="Kuspa A."/>
        </authorList>
    </citation>
    <scope>NUCLEOTIDE SEQUENCE [LARGE SCALE GENOMIC DNA]</scope>
    <source>
        <strain>AX4</strain>
    </source>
</reference>
<organism>
    <name type="scientific">Dictyostelium discoideum</name>
    <name type="common">Social amoeba</name>
    <dbReference type="NCBI Taxonomy" id="44689"/>
    <lineage>
        <taxon>Eukaryota</taxon>
        <taxon>Amoebozoa</taxon>
        <taxon>Evosea</taxon>
        <taxon>Eumycetozoa</taxon>
        <taxon>Dictyostelia</taxon>
        <taxon>Dictyosteliales</taxon>
        <taxon>Dictyosteliaceae</taxon>
        <taxon>Dictyostelium</taxon>
    </lineage>
</organism>
<keyword id="KW-0963">Cytoplasm</keyword>
<keyword id="KW-0396">Initiation factor</keyword>
<keyword id="KW-0479">Metal-binding</keyword>
<keyword id="KW-0648">Protein biosynthesis</keyword>
<keyword id="KW-1185">Reference proteome</keyword>
<keyword id="KW-0862">Zinc</keyword>
<keyword id="KW-0863">Zinc-finger</keyword>
<comment type="function">
    <text evidence="1">Component of the eIF2 complex that functions in the early steps of protein synthesis by forming a ternary complex with GTP and initiator tRNA. This complex binds to a 40S ribosomal subunit, followed by mRNA binding to form a 43S pre-initiation complex (43S PIC). Junction of the 60S ribosomal subunit to form the 80S initiation complex is preceded by hydrolysis of the GTP bound to eIF2 and release of an eIF2-GDP binary complex. In order for eIF2 to recycle and catalyze another round of initiation, the GDP bound to eIF2 must exchange with GTP by way of a reaction catalyzed by eIF2B (By similarity).</text>
</comment>
<comment type="subunit">
    <text evidence="2">Eukaryotic translation initiation factor 2 eIF2 is a heterotrimeric complex composed of an alpha, a beta and a gamma subunit.</text>
</comment>
<comment type="subcellular location">
    <subcellularLocation>
        <location evidence="3">Cytoplasm</location>
        <location evidence="3">Cytosol</location>
    </subcellularLocation>
</comment>
<comment type="similarity">
    <text evidence="6">Belongs to the eIF-2-beta/eIF-5 family.</text>
</comment>
<evidence type="ECO:0000250" key="1"/>
<evidence type="ECO:0000250" key="2">
    <source>
        <dbReference type="UniProtKB" id="P09064"/>
    </source>
</evidence>
<evidence type="ECO:0000250" key="3">
    <source>
        <dbReference type="UniProtKB" id="P56329"/>
    </source>
</evidence>
<evidence type="ECO:0000255" key="4"/>
<evidence type="ECO:0000256" key="5">
    <source>
        <dbReference type="SAM" id="MobiDB-lite"/>
    </source>
</evidence>
<evidence type="ECO:0000305" key="6"/>
<protein>
    <recommendedName>
        <fullName>Eukaryotic translation initiation factor 2 subunit 2</fullName>
    </recommendedName>
    <alternativeName>
        <fullName>Eukaryotic translation initiation factor 2 subunit beta</fullName>
        <shortName>eIF2-beta</shortName>
    </alternativeName>
</protein>
<feature type="chain" id="PRO_0000328071" description="Eukaryotic translation initiation factor 2 subunit 2">
    <location>
        <begin position="1"/>
        <end position="317"/>
    </location>
</feature>
<feature type="zinc finger region" description="C4-type" evidence="4">
    <location>
        <begin position="222"/>
        <end position="246"/>
    </location>
</feature>
<feature type="region of interest" description="Disordered" evidence="5">
    <location>
        <begin position="1"/>
        <end position="146"/>
    </location>
</feature>
<feature type="compositionally biased region" description="Basic and acidic residues" evidence="5">
    <location>
        <begin position="79"/>
        <end position="90"/>
    </location>
</feature>
<feature type="compositionally biased region" description="Low complexity" evidence="5">
    <location>
        <begin position="109"/>
        <end position="125"/>
    </location>
</feature>
<proteinExistence type="inferred from homology"/>
<gene>
    <name type="primary">eif2s2</name>
    <name type="synonym">eif2b</name>
    <name type="ORF">DDB_G0282035</name>
</gene>